<dbReference type="EMBL" id="BX548175">
    <property type="protein sequence ID" value="CAE22264.1"/>
    <property type="molecule type" value="Genomic_DNA"/>
</dbReference>
<dbReference type="RefSeq" id="WP_011131454.1">
    <property type="nucleotide sequence ID" value="NC_005071.1"/>
</dbReference>
<dbReference type="SMR" id="Q7V477"/>
<dbReference type="KEGG" id="pmt:PMT_2090"/>
<dbReference type="eggNOG" id="COG0244">
    <property type="taxonomic scope" value="Bacteria"/>
</dbReference>
<dbReference type="HOGENOM" id="CLU_092227_1_1_3"/>
<dbReference type="OrthoDB" id="9808307at2"/>
<dbReference type="Proteomes" id="UP000001423">
    <property type="component" value="Chromosome"/>
</dbReference>
<dbReference type="GO" id="GO:1990904">
    <property type="term" value="C:ribonucleoprotein complex"/>
    <property type="evidence" value="ECO:0007669"/>
    <property type="project" value="UniProtKB-KW"/>
</dbReference>
<dbReference type="GO" id="GO:0005840">
    <property type="term" value="C:ribosome"/>
    <property type="evidence" value="ECO:0007669"/>
    <property type="project" value="UniProtKB-KW"/>
</dbReference>
<dbReference type="GO" id="GO:0070180">
    <property type="term" value="F:large ribosomal subunit rRNA binding"/>
    <property type="evidence" value="ECO:0007669"/>
    <property type="project" value="UniProtKB-UniRule"/>
</dbReference>
<dbReference type="GO" id="GO:0006412">
    <property type="term" value="P:translation"/>
    <property type="evidence" value="ECO:0007669"/>
    <property type="project" value="UniProtKB-UniRule"/>
</dbReference>
<dbReference type="CDD" id="cd05797">
    <property type="entry name" value="Ribosomal_L10"/>
    <property type="match status" value="1"/>
</dbReference>
<dbReference type="Gene3D" id="3.30.70.1730">
    <property type="match status" value="1"/>
</dbReference>
<dbReference type="Gene3D" id="6.10.250.290">
    <property type="match status" value="1"/>
</dbReference>
<dbReference type="HAMAP" id="MF_00362">
    <property type="entry name" value="Ribosomal_uL10"/>
    <property type="match status" value="1"/>
</dbReference>
<dbReference type="InterPro" id="IPR001790">
    <property type="entry name" value="Ribosomal_uL10"/>
</dbReference>
<dbReference type="InterPro" id="IPR043141">
    <property type="entry name" value="Ribosomal_uL10-like_sf"/>
</dbReference>
<dbReference type="InterPro" id="IPR022973">
    <property type="entry name" value="Ribosomal_uL10_bac"/>
</dbReference>
<dbReference type="InterPro" id="IPR047865">
    <property type="entry name" value="Ribosomal_uL10_bac_type"/>
</dbReference>
<dbReference type="NCBIfam" id="NF000955">
    <property type="entry name" value="PRK00099.1-1"/>
    <property type="match status" value="1"/>
</dbReference>
<dbReference type="PANTHER" id="PTHR11560">
    <property type="entry name" value="39S RIBOSOMAL PROTEIN L10, MITOCHONDRIAL"/>
    <property type="match status" value="1"/>
</dbReference>
<dbReference type="Pfam" id="PF00466">
    <property type="entry name" value="Ribosomal_L10"/>
    <property type="match status" value="1"/>
</dbReference>
<dbReference type="SUPFAM" id="SSF160369">
    <property type="entry name" value="Ribosomal protein L10-like"/>
    <property type="match status" value="1"/>
</dbReference>
<name>RL10_PROMM</name>
<feature type="chain" id="PRO_0000154687" description="Large ribosomal subunit protein uL10">
    <location>
        <begin position="1"/>
        <end position="175"/>
    </location>
</feature>
<evidence type="ECO:0000255" key="1">
    <source>
        <dbReference type="HAMAP-Rule" id="MF_00362"/>
    </source>
</evidence>
<evidence type="ECO:0000305" key="2"/>
<organism>
    <name type="scientific">Prochlorococcus marinus (strain MIT 9313)</name>
    <dbReference type="NCBI Taxonomy" id="74547"/>
    <lineage>
        <taxon>Bacteria</taxon>
        <taxon>Bacillati</taxon>
        <taxon>Cyanobacteriota</taxon>
        <taxon>Cyanophyceae</taxon>
        <taxon>Synechococcales</taxon>
        <taxon>Prochlorococcaceae</taxon>
        <taxon>Prochlorococcus</taxon>
    </lineage>
</organism>
<accession>Q7V477</accession>
<sequence length="175" mass="18500">MGRTLESKQQIVEELKGLLGEAEMALVLDYQGLSIKEMSDLRTRLQASNGVCKVTKNTLMRHAINGNGAWSNLESLLTGTNAFVLIKGDVGGAVKAVQAFQKDTKKSETKGGLFEGKLLSQGEIKAIGDLPTKEVLMAQIAGSLNALATKVAVGINEVPSGLARALHQHAESGES</sequence>
<proteinExistence type="inferred from homology"/>
<protein>
    <recommendedName>
        <fullName evidence="1">Large ribosomal subunit protein uL10</fullName>
    </recommendedName>
    <alternativeName>
        <fullName evidence="2">50S ribosomal protein L10</fullName>
    </alternativeName>
</protein>
<keyword id="KW-1185">Reference proteome</keyword>
<keyword id="KW-0687">Ribonucleoprotein</keyword>
<keyword id="KW-0689">Ribosomal protein</keyword>
<keyword id="KW-0694">RNA-binding</keyword>
<keyword id="KW-0699">rRNA-binding</keyword>
<gene>
    <name evidence="1" type="primary">rplJ</name>
    <name evidence="1" type="synonym">rpl10</name>
    <name type="ordered locus">PMT_2090</name>
</gene>
<reference key="1">
    <citation type="journal article" date="2003" name="Nature">
        <title>Genome divergence in two Prochlorococcus ecotypes reflects oceanic niche differentiation.</title>
        <authorList>
            <person name="Rocap G."/>
            <person name="Larimer F.W."/>
            <person name="Lamerdin J.E."/>
            <person name="Malfatti S."/>
            <person name="Chain P."/>
            <person name="Ahlgren N.A."/>
            <person name="Arellano A."/>
            <person name="Coleman M."/>
            <person name="Hauser L."/>
            <person name="Hess W.R."/>
            <person name="Johnson Z.I."/>
            <person name="Land M.L."/>
            <person name="Lindell D."/>
            <person name="Post A.F."/>
            <person name="Regala W."/>
            <person name="Shah M."/>
            <person name="Shaw S.L."/>
            <person name="Steglich C."/>
            <person name="Sullivan M.B."/>
            <person name="Ting C.S."/>
            <person name="Tolonen A."/>
            <person name="Webb E.A."/>
            <person name="Zinser E.R."/>
            <person name="Chisholm S.W."/>
        </authorList>
    </citation>
    <scope>NUCLEOTIDE SEQUENCE [LARGE SCALE GENOMIC DNA]</scope>
    <source>
        <strain>MIT 9313</strain>
    </source>
</reference>
<comment type="function">
    <text evidence="1">Forms part of the ribosomal stalk, playing a central role in the interaction of the ribosome with GTP-bound translation factors.</text>
</comment>
<comment type="subunit">
    <text evidence="1">Part of the ribosomal stalk of the 50S ribosomal subunit. The N-terminus interacts with L11 and the large rRNA to form the base of the stalk. The C-terminus forms an elongated spine to which L12 dimers bind in a sequential fashion forming a multimeric L10(L12)X complex.</text>
</comment>
<comment type="similarity">
    <text evidence="1">Belongs to the universal ribosomal protein uL10 family.</text>
</comment>